<organism>
    <name type="scientific">Conus victoriae</name>
    <name type="common">Queen Victoria cone</name>
    <dbReference type="NCBI Taxonomy" id="319920"/>
    <lineage>
        <taxon>Eukaryota</taxon>
        <taxon>Metazoa</taxon>
        <taxon>Spiralia</taxon>
        <taxon>Lophotrochozoa</taxon>
        <taxon>Mollusca</taxon>
        <taxon>Gastropoda</taxon>
        <taxon>Caenogastropoda</taxon>
        <taxon>Neogastropoda</taxon>
        <taxon>Conoidea</taxon>
        <taxon>Conidae</taxon>
        <taxon>Conus</taxon>
        <taxon>Cylinder</taxon>
    </lineage>
</organism>
<accession>P69761</accession>
<comment type="function">
    <text evidence="1">Omega-conotoxins act at presynaptic membranes, they bind and block voltage-gated calcium channels. Act on high voltage-activated (HVA) calcium currents in molluscan neurons (By similarity).</text>
</comment>
<comment type="subcellular location">
    <subcellularLocation>
        <location evidence="1">Secreted</location>
    </subcellularLocation>
</comment>
<comment type="tissue specificity">
    <text>Expressed by the venom duct.</text>
</comment>
<comment type="domain">
    <text evidence="1">The presence of a 'disulfide through disulfide knot' structurally defines this protein as a knottin.</text>
</comment>
<comment type="domain">
    <text>The cysteine framework is VI/VII (C-C-CC-C-C).</text>
</comment>
<comment type="similarity">
    <text evidence="4">Belongs to the conotoxin O1 superfamily.</text>
</comment>
<keyword id="KW-1015">Disulfide bond</keyword>
<keyword id="KW-0872">Ion channel impairing toxin</keyword>
<keyword id="KW-0960">Knottin</keyword>
<keyword id="KW-0528">Neurotoxin</keyword>
<keyword id="KW-0638">Presynaptic neurotoxin</keyword>
<keyword id="KW-0964">Secreted</keyword>
<keyword id="KW-0732">Signal</keyword>
<keyword id="KW-0800">Toxin</keyword>
<proteinExistence type="evidence at transcript level"/>
<feature type="signal peptide" evidence="3">
    <location>
        <begin position="1"/>
        <end position="22"/>
    </location>
</feature>
<feature type="propeptide" id="PRO_0000034972" evidence="1">
    <location>
        <begin position="23"/>
        <end position="51"/>
    </location>
</feature>
<feature type="peptide" id="PRO_0000034973" description="Omega-conotoxin-like Vc6.4">
    <location>
        <begin position="53"/>
        <end position="81"/>
    </location>
</feature>
<feature type="disulfide bond" evidence="2">
    <location>
        <begin position="55"/>
        <end position="72"/>
    </location>
</feature>
<feature type="disulfide bond" evidence="2">
    <location>
        <begin position="62"/>
        <end position="76"/>
    </location>
</feature>
<feature type="disulfide bond" evidence="2">
    <location>
        <begin position="71"/>
        <end position="80"/>
    </location>
</feature>
<reference key="1">
    <citation type="journal article" date="2004" name="J. Mass Spectrom.">
        <title>Determining sequences and post-translational modifications of novel conotoxins in Conus victoriae using cDNA sequencing and mass spectrometry.</title>
        <authorList>
            <person name="Jakubowski J.A."/>
            <person name="Keays D.A."/>
            <person name="Kelley W.P."/>
            <person name="Sandall D.W."/>
            <person name="Bingham J.-P."/>
            <person name="Livett B.G."/>
            <person name="Gayler K.R."/>
            <person name="Sweedler J.V."/>
        </authorList>
    </citation>
    <scope>NUCLEOTIDE SEQUENCE [MRNA]</scope>
    <source>
        <tissue>Venom duct</tissue>
    </source>
</reference>
<dbReference type="SMR" id="P69761"/>
<dbReference type="ConoServer" id="1426">
    <property type="toxin name" value="Vc6.4 precursor"/>
</dbReference>
<dbReference type="GO" id="GO:0005576">
    <property type="term" value="C:extracellular region"/>
    <property type="evidence" value="ECO:0007669"/>
    <property type="project" value="UniProtKB-SubCell"/>
</dbReference>
<dbReference type="GO" id="GO:0044231">
    <property type="term" value="C:host cell presynaptic membrane"/>
    <property type="evidence" value="ECO:0007669"/>
    <property type="project" value="UniProtKB-KW"/>
</dbReference>
<dbReference type="GO" id="GO:0008200">
    <property type="term" value="F:ion channel inhibitor activity"/>
    <property type="evidence" value="ECO:0007669"/>
    <property type="project" value="InterPro"/>
</dbReference>
<dbReference type="GO" id="GO:0090729">
    <property type="term" value="F:toxin activity"/>
    <property type="evidence" value="ECO:0007669"/>
    <property type="project" value="UniProtKB-KW"/>
</dbReference>
<dbReference type="InterPro" id="IPR004214">
    <property type="entry name" value="Conotoxin"/>
</dbReference>
<dbReference type="InterPro" id="IPR012321">
    <property type="entry name" value="Conotoxin_omega-typ_CS"/>
</dbReference>
<dbReference type="Pfam" id="PF02950">
    <property type="entry name" value="Conotoxin"/>
    <property type="match status" value="1"/>
</dbReference>
<dbReference type="PROSITE" id="PS60004">
    <property type="entry name" value="OMEGA_CONOTOXIN"/>
    <property type="match status" value="1"/>
</dbReference>
<sequence>MKLTCVMIVAVLFLTANTFVTAVPHSSNVLENLYLKARHEMENPEASKLNTRYDCEPPGNFCGMIKVGPPCCSGWCFFACA</sequence>
<name>O164_CONVC</name>
<protein>
    <recommendedName>
        <fullName>Omega-conotoxin-like Vc6.4</fullName>
    </recommendedName>
</protein>
<evidence type="ECO:0000250" key="1"/>
<evidence type="ECO:0000250" key="2">
    <source>
        <dbReference type="UniProtKB" id="Q26443"/>
    </source>
</evidence>
<evidence type="ECO:0000255" key="3"/>
<evidence type="ECO:0000305" key="4"/>